<reference key="1">
    <citation type="journal article" date="2008" name="PLoS ONE">
        <title>Comparative analysis of Acinetobacters: three genomes for three lifestyles.</title>
        <authorList>
            <person name="Vallenet D."/>
            <person name="Nordmann P."/>
            <person name="Barbe V."/>
            <person name="Poirel L."/>
            <person name="Mangenot S."/>
            <person name="Bataille E."/>
            <person name="Dossat C."/>
            <person name="Gas S."/>
            <person name="Kreimeyer A."/>
            <person name="Lenoble P."/>
            <person name="Oztas S."/>
            <person name="Poulain J."/>
            <person name="Segurens B."/>
            <person name="Robert C."/>
            <person name="Abergel C."/>
            <person name="Claverie J.-M."/>
            <person name="Raoult D."/>
            <person name="Medigue C."/>
            <person name="Weissenbach J."/>
            <person name="Cruveiller S."/>
        </authorList>
    </citation>
    <scope>NUCLEOTIDE SEQUENCE [LARGE SCALE GENOMIC DNA]</scope>
    <source>
        <strain>SDF</strain>
    </source>
</reference>
<protein>
    <recommendedName>
        <fullName evidence="1">Small ribosomal subunit protein bS6</fullName>
    </recommendedName>
    <alternativeName>
        <fullName evidence="2">30S ribosomal protein S6</fullName>
    </alternativeName>
</protein>
<name>RS6_ACIBS</name>
<sequence length="127" mass="14963">MRHYEIVLLVHPDQSDQVVGMVERYISQIKEADGQIHRLEDWGRRQLAYPINKIHKAHYILMNVECGQSTLDELEELFRYNDAIIRNLIIRREHAITEESLLAKSAEEKRARKAQREEAQQVAQEAE</sequence>
<comment type="function">
    <text evidence="1">Binds together with bS18 to 16S ribosomal RNA.</text>
</comment>
<comment type="similarity">
    <text evidence="1">Belongs to the bacterial ribosomal protein bS6 family.</text>
</comment>
<accession>B0VM10</accession>
<gene>
    <name evidence="1" type="primary">rpsF</name>
    <name type="ordered locus">ABSDF1570</name>
</gene>
<evidence type="ECO:0000255" key="1">
    <source>
        <dbReference type="HAMAP-Rule" id="MF_00360"/>
    </source>
</evidence>
<evidence type="ECO:0000305" key="2"/>
<proteinExistence type="inferred from homology"/>
<organism>
    <name type="scientific">Acinetobacter baumannii (strain SDF)</name>
    <dbReference type="NCBI Taxonomy" id="509170"/>
    <lineage>
        <taxon>Bacteria</taxon>
        <taxon>Pseudomonadati</taxon>
        <taxon>Pseudomonadota</taxon>
        <taxon>Gammaproteobacteria</taxon>
        <taxon>Moraxellales</taxon>
        <taxon>Moraxellaceae</taxon>
        <taxon>Acinetobacter</taxon>
        <taxon>Acinetobacter calcoaceticus/baumannii complex</taxon>
    </lineage>
</organism>
<feature type="chain" id="PRO_1000120693" description="Small ribosomal subunit protein bS6">
    <location>
        <begin position="1"/>
        <end position="127"/>
    </location>
</feature>
<keyword id="KW-0687">Ribonucleoprotein</keyword>
<keyword id="KW-0689">Ribosomal protein</keyword>
<keyword id="KW-0694">RNA-binding</keyword>
<keyword id="KW-0699">rRNA-binding</keyword>
<dbReference type="EMBL" id="CU468230">
    <property type="protein sequence ID" value="CAP00910.1"/>
    <property type="molecule type" value="Genomic_DNA"/>
</dbReference>
<dbReference type="SMR" id="B0VM10"/>
<dbReference type="KEGG" id="abm:ABSDF1570"/>
<dbReference type="HOGENOM" id="CLU_113441_6_1_6"/>
<dbReference type="Proteomes" id="UP000001741">
    <property type="component" value="Chromosome"/>
</dbReference>
<dbReference type="GO" id="GO:0022627">
    <property type="term" value="C:cytosolic small ribosomal subunit"/>
    <property type="evidence" value="ECO:0007669"/>
    <property type="project" value="TreeGrafter"/>
</dbReference>
<dbReference type="GO" id="GO:0070181">
    <property type="term" value="F:small ribosomal subunit rRNA binding"/>
    <property type="evidence" value="ECO:0007669"/>
    <property type="project" value="TreeGrafter"/>
</dbReference>
<dbReference type="GO" id="GO:0003735">
    <property type="term" value="F:structural constituent of ribosome"/>
    <property type="evidence" value="ECO:0007669"/>
    <property type="project" value="InterPro"/>
</dbReference>
<dbReference type="GO" id="GO:0006412">
    <property type="term" value="P:translation"/>
    <property type="evidence" value="ECO:0007669"/>
    <property type="project" value="UniProtKB-UniRule"/>
</dbReference>
<dbReference type="CDD" id="cd00473">
    <property type="entry name" value="bS6"/>
    <property type="match status" value="1"/>
</dbReference>
<dbReference type="FunFam" id="3.30.70.60:FF:000003">
    <property type="entry name" value="30S ribosomal protein S6"/>
    <property type="match status" value="1"/>
</dbReference>
<dbReference type="Gene3D" id="3.30.70.60">
    <property type="match status" value="1"/>
</dbReference>
<dbReference type="HAMAP" id="MF_00360">
    <property type="entry name" value="Ribosomal_bS6"/>
    <property type="match status" value="1"/>
</dbReference>
<dbReference type="InterPro" id="IPR000529">
    <property type="entry name" value="Ribosomal_bS6"/>
</dbReference>
<dbReference type="InterPro" id="IPR020815">
    <property type="entry name" value="Ribosomal_bS6_CS"/>
</dbReference>
<dbReference type="InterPro" id="IPR035980">
    <property type="entry name" value="Ribosomal_bS6_sf"/>
</dbReference>
<dbReference type="InterPro" id="IPR020814">
    <property type="entry name" value="Ribosomal_S6_plastid/chlpt"/>
</dbReference>
<dbReference type="InterPro" id="IPR014717">
    <property type="entry name" value="Transl_elong_EF1B/ribsomal_bS6"/>
</dbReference>
<dbReference type="NCBIfam" id="TIGR00166">
    <property type="entry name" value="S6"/>
    <property type="match status" value="1"/>
</dbReference>
<dbReference type="PANTHER" id="PTHR21011">
    <property type="entry name" value="MITOCHONDRIAL 28S RIBOSOMAL PROTEIN S6"/>
    <property type="match status" value="1"/>
</dbReference>
<dbReference type="PANTHER" id="PTHR21011:SF1">
    <property type="entry name" value="SMALL RIBOSOMAL SUBUNIT PROTEIN BS6M"/>
    <property type="match status" value="1"/>
</dbReference>
<dbReference type="Pfam" id="PF01250">
    <property type="entry name" value="Ribosomal_S6"/>
    <property type="match status" value="1"/>
</dbReference>
<dbReference type="SUPFAM" id="SSF54995">
    <property type="entry name" value="Ribosomal protein S6"/>
    <property type="match status" value="1"/>
</dbReference>
<dbReference type="PROSITE" id="PS01048">
    <property type="entry name" value="RIBOSOMAL_S6"/>
    <property type="match status" value="1"/>
</dbReference>